<name>RLME_VIBCH</name>
<protein>
    <recommendedName>
        <fullName evidence="1">Ribosomal RNA large subunit methyltransferase E</fullName>
        <ecNumber evidence="1">2.1.1.166</ecNumber>
    </recommendedName>
    <alternativeName>
        <fullName evidence="1">23S rRNA Um2552 methyltransferase</fullName>
    </alternativeName>
    <alternativeName>
        <fullName evidence="1">rRNA (uridine-2'-O-)-methyltransferase</fullName>
    </alternativeName>
</protein>
<sequence>MSKQKHSASSTRWLKEHFDDKYVNEAKKKGYRSRAIFKIEEIQNKDKLLKAGMTVVDLGAAPGGWSQFAAKVVGEGGRVIACDLLPMESIAGVSFLQGDFREEAVLNALLDRIQPDMVDVVMSDMAPNMAGNLSVDQPRAMYLVELALDMCRQVLAPNGSFVVKVFQGEGFDDYVKAVRDLFKVVKIRKPDSSRSRSREVFIVATGYKG</sequence>
<evidence type="ECO:0000255" key="1">
    <source>
        <dbReference type="HAMAP-Rule" id="MF_01547"/>
    </source>
</evidence>
<reference key="1">
    <citation type="journal article" date="2000" name="Nature">
        <title>DNA sequence of both chromosomes of the cholera pathogen Vibrio cholerae.</title>
        <authorList>
            <person name="Heidelberg J.F."/>
            <person name="Eisen J.A."/>
            <person name="Nelson W.C."/>
            <person name="Clayton R.A."/>
            <person name="Gwinn M.L."/>
            <person name="Dodson R.J."/>
            <person name="Haft D.H."/>
            <person name="Hickey E.K."/>
            <person name="Peterson J.D."/>
            <person name="Umayam L.A."/>
            <person name="Gill S.R."/>
            <person name="Nelson K.E."/>
            <person name="Read T.D."/>
            <person name="Tettelin H."/>
            <person name="Richardson D.L."/>
            <person name="Ermolaeva M.D."/>
            <person name="Vamathevan J.J."/>
            <person name="Bass S."/>
            <person name="Qin H."/>
            <person name="Dragoi I."/>
            <person name="Sellers P."/>
            <person name="McDonald L.A."/>
            <person name="Utterback T.R."/>
            <person name="Fleischmann R.D."/>
            <person name="Nierman W.C."/>
            <person name="White O."/>
            <person name="Salzberg S.L."/>
            <person name="Smith H.O."/>
            <person name="Colwell R.R."/>
            <person name="Mekalanos J.J."/>
            <person name="Venter J.C."/>
            <person name="Fraser C.M."/>
        </authorList>
    </citation>
    <scope>NUCLEOTIDE SEQUENCE [LARGE SCALE GENOMIC DNA]</scope>
    <source>
        <strain>ATCC 39315 / El Tor Inaba N16961</strain>
    </source>
</reference>
<gene>
    <name evidence="1" type="primary">rlmE</name>
    <name evidence="1" type="synonym">ftsJ</name>
    <name evidence="1" type="synonym">rrmJ</name>
    <name type="ordered locus">VC_0636</name>
</gene>
<proteinExistence type="inferred from homology"/>
<keyword id="KW-0963">Cytoplasm</keyword>
<keyword id="KW-0489">Methyltransferase</keyword>
<keyword id="KW-1185">Reference proteome</keyword>
<keyword id="KW-0698">rRNA processing</keyword>
<keyword id="KW-0949">S-adenosyl-L-methionine</keyword>
<keyword id="KW-0808">Transferase</keyword>
<feature type="chain" id="PRO_0000155546" description="Ribosomal RNA large subunit methyltransferase E">
    <location>
        <begin position="1"/>
        <end position="209"/>
    </location>
</feature>
<feature type="active site" description="Proton acceptor" evidence="1">
    <location>
        <position position="164"/>
    </location>
</feature>
<feature type="binding site" evidence="1">
    <location>
        <position position="63"/>
    </location>
    <ligand>
        <name>S-adenosyl-L-methionine</name>
        <dbReference type="ChEBI" id="CHEBI:59789"/>
    </ligand>
</feature>
<feature type="binding site" evidence="1">
    <location>
        <position position="65"/>
    </location>
    <ligand>
        <name>S-adenosyl-L-methionine</name>
        <dbReference type="ChEBI" id="CHEBI:59789"/>
    </ligand>
</feature>
<feature type="binding site" evidence="1">
    <location>
        <position position="83"/>
    </location>
    <ligand>
        <name>S-adenosyl-L-methionine</name>
        <dbReference type="ChEBI" id="CHEBI:59789"/>
    </ligand>
</feature>
<feature type="binding site" evidence="1">
    <location>
        <position position="99"/>
    </location>
    <ligand>
        <name>S-adenosyl-L-methionine</name>
        <dbReference type="ChEBI" id="CHEBI:59789"/>
    </ligand>
</feature>
<feature type="binding site" evidence="1">
    <location>
        <position position="124"/>
    </location>
    <ligand>
        <name>S-adenosyl-L-methionine</name>
        <dbReference type="ChEBI" id="CHEBI:59789"/>
    </ligand>
</feature>
<organism>
    <name type="scientific">Vibrio cholerae serotype O1 (strain ATCC 39315 / El Tor Inaba N16961)</name>
    <dbReference type="NCBI Taxonomy" id="243277"/>
    <lineage>
        <taxon>Bacteria</taxon>
        <taxon>Pseudomonadati</taxon>
        <taxon>Pseudomonadota</taxon>
        <taxon>Gammaproteobacteria</taxon>
        <taxon>Vibrionales</taxon>
        <taxon>Vibrionaceae</taxon>
        <taxon>Vibrio</taxon>
    </lineage>
</organism>
<comment type="function">
    <text evidence="1">Specifically methylates the uridine in position 2552 of 23S rRNA at the 2'-O position of the ribose in the fully assembled 50S ribosomal subunit.</text>
</comment>
<comment type="catalytic activity">
    <reaction evidence="1">
        <text>uridine(2552) in 23S rRNA + S-adenosyl-L-methionine = 2'-O-methyluridine(2552) in 23S rRNA + S-adenosyl-L-homocysteine + H(+)</text>
        <dbReference type="Rhea" id="RHEA:42720"/>
        <dbReference type="Rhea" id="RHEA-COMP:10202"/>
        <dbReference type="Rhea" id="RHEA-COMP:10203"/>
        <dbReference type="ChEBI" id="CHEBI:15378"/>
        <dbReference type="ChEBI" id="CHEBI:57856"/>
        <dbReference type="ChEBI" id="CHEBI:59789"/>
        <dbReference type="ChEBI" id="CHEBI:65315"/>
        <dbReference type="ChEBI" id="CHEBI:74478"/>
        <dbReference type="EC" id="2.1.1.166"/>
    </reaction>
</comment>
<comment type="subcellular location">
    <subcellularLocation>
        <location evidence="1">Cytoplasm</location>
    </subcellularLocation>
</comment>
<comment type="similarity">
    <text evidence="1">Belongs to the class I-like SAM-binding methyltransferase superfamily. RNA methyltransferase RlmE family.</text>
</comment>
<accession>Q9KU87</accession>
<dbReference type="EC" id="2.1.1.166" evidence="1"/>
<dbReference type="EMBL" id="AE003852">
    <property type="protein sequence ID" value="AAF93802.1"/>
    <property type="molecule type" value="Genomic_DNA"/>
</dbReference>
<dbReference type="PIR" id="D82299">
    <property type="entry name" value="D82299"/>
</dbReference>
<dbReference type="RefSeq" id="NP_230285.1">
    <property type="nucleotide sequence ID" value="NC_002505.1"/>
</dbReference>
<dbReference type="RefSeq" id="WP_000043220.1">
    <property type="nucleotide sequence ID" value="NZ_LT906614.1"/>
</dbReference>
<dbReference type="SMR" id="Q9KU87"/>
<dbReference type="STRING" id="243277.VC_0636"/>
<dbReference type="DNASU" id="2615424"/>
<dbReference type="EnsemblBacteria" id="AAF93802">
    <property type="protein sequence ID" value="AAF93802"/>
    <property type="gene ID" value="VC_0636"/>
</dbReference>
<dbReference type="GeneID" id="89515213"/>
<dbReference type="KEGG" id="vch:VC_0636"/>
<dbReference type="PATRIC" id="fig|243277.26.peg.606"/>
<dbReference type="eggNOG" id="COG0293">
    <property type="taxonomic scope" value="Bacteria"/>
</dbReference>
<dbReference type="HOGENOM" id="CLU_009422_4_0_6"/>
<dbReference type="Proteomes" id="UP000000584">
    <property type="component" value="Chromosome 1"/>
</dbReference>
<dbReference type="GO" id="GO:0005737">
    <property type="term" value="C:cytoplasm"/>
    <property type="evidence" value="ECO:0007669"/>
    <property type="project" value="UniProtKB-SubCell"/>
</dbReference>
<dbReference type="GO" id="GO:0008650">
    <property type="term" value="F:rRNA (uridine-2'-O-)-methyltransferase activity"/>
    <property type="evidence" value="ECO:0000318"/>
    <property type="project" value="GO_Central"/>
</dbReference>
<dbReference type="GO" id="GO:0001510">
    <property type="term" value="P:RNA methylation"/>
    <property type="evidence" value="ECO:0000318"/>
    <property type="project" value="GO_Central"/>
</dbReference>
<dbReference type="CDD" id="cd02440">
    <property type="entry name" value="AdoMet_MTases"/>
    <property type="match status" value="1"/>
</dbReference>
<dbReference type="FunFam" id="3.40.50.150:FF:000005">
    <property type="entry name" value="Ribosomal RNA large subunit methyltransferase E"/>
    <property type="match status" value="1"/>
</dbReference>
<dbReference type="Gene3D" id="3.40.50.150">
    <property type="entry name" value="Vaccinia Virus protein VP39"/>
    <property type="match status" value="1"/>
</dbReference>
<dbReference type="HAMAP" id="MF_01547">
    <property type="entry name" value="RNA_methyltr_E"/>
    <property type="match status" value="1"/>
</dbReference>
<dbReference type="InterPro" id="IPR050082">
    <property type="entry name" value="RNA_methyltr_RlmE"/>
</dbReference>
<dbReference type="InterPro" id="IPR002877">
    <property type="entry name" value="RNA_MeTrfase_FtsJ_dom"/>
</dbReference>
<dbReference type="InterPro" id="IPR015507">
    <property type="entry name" value="rRNA-MeTfrase_E"/>
</dbReference>
<dbReference type="InterPro" id="IPR029063">
    <property type="entry name" value="SAM-dependent_MTases_sf"/>
</dbReference>
<dbReference type="NCBIfam" id="NF008390">
    <property type="entry name" value="PRK11188.1"/>
    <property type="match status" value="1"/>
</dbReference>
<dbReference type="PANTHER" id="PTHR10920">
    <property type="entry name" value="RIBOSOMAL RNA METHYLTRANSFERASE"/>
    <property type="match status" value="1"/>
</dbReference>
<dbReference type="PANTHER" id="PTHR10920:SF18">
    <property type="entry name" value="RRNA METHYLTRANSFERASE 2, MITOCHONDRIAL"/>
    <property type="match status" value="1"/>
</dbReference>
<dbReference type="Pfam" id="PF01728">
    <property type="entry name" value="FtsJ"/>
    <property type="match status" value="1"/>
</dbReference>
<dbReference type="PIRSF" id="PIRSF005461">
    <property type="entry name" value="23S_rRNA_mtase"/>
    <property type="match status" value="1"/>
</dbReference>
<dbReference type="SUPFAM" id="SSF53335">
    <property type="entry name" value="S-adenosyl-L-methionine-dependent methyltransferases"/>
    <property type="match status" value="1"/>
</dbReference>